<evidence type="ECO:0000255" key="1">
    <source>
        <dbReference type="HAMAP-Rule" id="MF_03112"/>
    </source>
</evidence>
<reference key="1">
    <citation type="journal article" date="2009" name="Nature">
        <title>Evolution of pathogenicity and sexual reproduction in eight Candida genomes.</title>
        <authorList>
            <person name="Butler G."/>
            <person name="Rasmussen M.D."/>
            <person name="Lin M.F."/>
            <person name="Santos M.A.S."/>
            <person name="Sakthikumar S."/>
            <person name="Munro C.A."/>
            <person name="Rheinbay E."/>
            <person name="Grabherr M."/>
            <person name="Forche A."/>
            <person name="Reedy J.L."/>
            <person name="Agrafioti I."/>
            <person name="Arnaud M.B."/>
            <person name="Bates S."/>
            <person name="Brown A.J.P."/>
            <person name="Brunke S."/>
            <person name="Costanzo M.C."/>
            <person name="Fitzpatrick D.A."/>
            <person name="de Groot P.W.J."/>
            <person name="Harris D."/>
            <person name="Hoyer L.L."/>
            <person name="Hube B."/>
            <person name="Klis F.M."/>
            <person name="Kodira C."/>
            <person name="Lennard N."/>
            <person name="Logue M.E."/>
            <person name="Martin R."/>
            <person name="Neiman A.M."/>
            <person name="Nikolaou E."/>
            <person name="Quail M.A."/>
            <person name="Quinn J."/>
            <person name="Santos M.C."/>
            <person name="Schmitzberger F.F."/>
            <person name="Sherlock G."/>
            <person name="Shah P."/>
            <person name="Silverstein K.A.T."/>
            <person name="Skrzypek M.S."/>
            <person name="Soll D."/>
            <person name="Staggs R."/>
            <person name="Stansfield I."/>
            <person name="Stumpf M.P.H."/>
            <person name="Sudbery P.E."/>
            <person name="Srikantha T."/>
            <person name="Zeng Q."/>
            <person name="Berman J."/>
            <person name="Berriman M."/>
            <person name="Heitman J."/>
            <person name="Gow N.A.R."/>
            <person name="Lorenz M.C."/>
            <person name="Birren B.W."/>
            <person name="Kellis M."/>
            <person name="Cuomo C.A."/>
        </authorList>
    </citation>
    <scope>NUCLEOTIDE SEQUENCE [LARGE SCALE GENOMIC DNA]</scope>
    <source>
        <strain>ATCC 11503 / BCRC 21390 / CBS 2605 / JCM 1781 / NBRC 1676 / NRRL YB-4239</strain>
    </source>
</reference>
<gene>
    <name evidence="1" type="primary">GET3</name>
    <name type="ORF">LELG_01521</name>
</gene>
<sequence length="349" mass="39461">MELDLEPTLKPLIEQDTLKWIFVGGKGGVGKTTTSSSIAVQLALQHPESEFLLISTDPAHNLSDAFCQKFGKEARKVEGLSNLSCMEIDPEAAMSDLQQQAQQYNNDPNDPLKSIMSDMTGSIPGIDEALSFMEVLKHIKNQKVNENDSKDKISYRTIIFDTAPTGHTLRFLQLPSTLQKLLGKFQQLSGKLGPMMSMLGGGAGGQQDMFEKLNEVQKNVAEVNEQFTDPELTTFVCVCISEFLSLYETERMIQELMSYKMDVNSIVVNQLLFADDDENPCLRCVSRWKMQKKYLDQMAELYEDYHLVKMPLLGTEIRGVENLKKFSKFLMVPYDPKKDRGLITEMKEQ</sequence>
<organism>
    <name type="scientific">Lodderomyces elongisporus (strain ATCC 11503 / CBS 2605 / JCM 1781 / NBRC 1676 / NRRL YB-4239)</name>
    <name type="common">Yeast</name>
    <name type="synonym">Saccharomyces elongisporus</name>
    <dbReference type="NCBI Taxonomy" id="379508"/>
    <lineage>
        <taxon>Eukaryota</taxon>
        <taxon>Fungi</taxon>
        <taxon>Dikarya</taxon>
        <taxon>Ascomycota</taxon>
        <taxon>Saccharomycotina</taxon>
        <taxon>Pichiomycetes</taxon>
        <taxon>Debaryomycetaceae</taxon>
        <taxon>Candida/Lodderomyces clade</taxon>
        <taxon>Lodderomyces</taxon>
    </lineage>
</organism>
<protein>
    <recommendedName>
        <fullName evidence="1">ATPase GET3</fullName>
        <ecNumber evidence="1">3.6.-.-</ecNumber>
    </recommendedName>
    <alternativeName>
        <fullName evidence="1">Arsenical pump-driving ATPase</fullName>
    </alternativeName>
    <alternativeName>
        <fullName evidence="1">Arsenite-stimulated ATPase</fullName>
    </alternativeName>
    <alternativeName>
        <fullName evidence="1">Golgi to ER traffic protein 3</fullName>
    </alternativeName>
    <alternativeName>
        <fullName evidence="1">Guided entry of tail-anchored proteins 3</fullName>
    </alternativeName>
</protein>
<proteinExistence type="inferred from homology"/>
<comment type="function">
    <text evidence="1">ATPase required for the post-translational delivery of tail-anchored (TA) proteins to the endoplasmic reticulum. Recognizes and selectively binds the transmembrane domain of TA proteins in the cytosol. This complex then targets to the endoplasmic reticulum by membrane-bound receptors GET1 and GET2, where the tail-anchored protein is released for insertion. This process is regulated by ATP binding and hydrolysis. ATP binding drives the homodimer towards the closed dimer state, facilitating recognition of newly synthesized TA membrane proteins. ATP hydrolysis is required for insertion. Subsequently, the homodimer reverts towards the open dimer state, lowering its affinity for the GET1-GET2 receptor, and returning it to the cytosol to initiate a new round of targeting. Cooperates with the HDEL receptor ERD2 to mediate the ATP-dependent retrieval of resident ER proteins that contain a C-terminal H-D-E-L retention signal from the Golgi to the ER. Involved in low-level resistance to the oxyanions arsenite and arsenate, and in heat tolerance.</text>
</comment>
<comment type="subunit">
    <text evidence="1">Homodimer. Component of the Golgi to ER traffic (GET) complex, which is composed of GET1, GET2 and GET3. Within the complex, GET1 and GET2 form a heterotetramer which is stabilized by phosphatidylinositol binding and which binds to the GET3 homodimer. Interacts with the chloride channel protein GEF1.</text>
</comment>
<comment type="subcellular location">
    <subcellularLocation>
        <location evidence="1">Cytoplasm</location>
    </subcellularLocation>
    <subcellularLocation>
        <location evidence="1">Endoplasmic reticulum</location>
    </subcellularLocation>
    <subcellularLocation>
        <location evidence="1">Golgi apparatus</location>
    </subcellularLocation>
    <text evidence="1">GET1 and GET2 are required for targeting GET3 to the endoplasmic reticulum.</text>
</comment>
<comment type="similarity">
    <text evidence="1">Belongs to the arsA ATPase family.</text>
</comment>
<name>GET3_LODEL</name>
<dbReference type="EC" id="3.6.-.-" evidence="1"/>
<dbReference type="EMBL" id="CH981525">
    <property type="protein sequence ID" value="EDK43343.1"/>
    <property type="molecule type" value="Genomic_DNA"/>
</dbReference>
<dbReference type="RefSeq" id="XP_001526693.1">
    <property type="nucleotide sequence ID" value="XM_001526643.1"/>
</dbReference>
<dbReference type="SMR" id="A5DVY5"/>
<dbReference type="FunCoup" id="A5DVY5">
    <property type="interactions" value="951"/>
</dbReference>
<dbReference type="STRING" id="379508.A5DVY5"/>
<dbReference type="GeneID" id="5234150"/>
<dbReference type="KEGG" id="lel:PVL30_001491"/>
<dbReference type="VEuPathDB" id="FungiDB:LELG_01521"/>
<dbReference type="eggNOG" id="KOG2825">
    <property type="taxonomic scope" value="Eukaryota"/>
</dbReference>
<dbReference type="HOGENOM" id="CLU_040761_0_0_1"/>
<dbReference type="InParanoid" id="A5DVY5"/>
<dbReference type="OMA" id="MDAPYEF"/>
<dbReference type="OrthoDB" id="1770at2759"/>
<dbReference type="Proteomes" id="UP000001996">
    <property type="component" value="Unassembled WGS sequence"/>
</dbReference>
<dbReference type="GO" id="GO:0043529">
    <property type="term" value="C:GET complex"/>
    <property type="evidence" value="ECO:0007669"/>
    <property type="project" value="TreeGrafter"/>
</dbReference>
<dbReference type="GO" id="GO:0005794">
    <property type="term" value="C:Golgi apparatus"/>
    <property type="evidence" value="ECO:0007669"/>
    <property type="project" value="UniProtKB-SubCell"/>
</dbReference>
<dbReference type="GO" id="GO:0005524">
    <property type="term" value="F:ATP binding"/>
    <property type="evidence" value="ECO:0007669"/>
    <property type="project" value="UniProtKB-UniRule"/>
</dbReference>
<dbReference type="GO" id="GO:0016887">
    <property type="term" value="F:ATP hydrolysis activity"/>
    <property type="evidence" value="ECO:0007669"/>
    <property type="project" value="InterPro"/>
</dbReference>
<dbReference type="GO" id="GO:0046872">
    <property type="term" value="F:metal ion binding"/>
    <property type="evidence" value="ECO:0007669"/>
    <property type="project" value="UniProtKB-KW"/>
</dbReference>
<dbReference type="GO" id="GO:0071816">
    <property type="term" value="P:tail-anchored membrane protein insertion into ER membrane"/>
    <property type="evidence" value="ECO:0007669"/>
    <property type="project" value="TreeGrafter"/>
</dbReference>
<dbReference type="CDD" id="cd02035">
    <property type="entry name" value="ArsA"/>
    <property type="match status" value="1"/>
</dbReference>
<dbReference type="FunFam" id="3.40.50.300:FF:001359">
    <property type="entry name" value="ATPase GET3"/>
    <property type="match status" value="1"/>
</dbReference>
<dbReference type="Gene3D" id="3.40.50.300">
    <property type="entry name" value="P-loop containing nucleotide triphosphate hydrolases"/>
    <property type="match status" value="1"/>
</dbReference>
<dbReference type="HAMAP" id="MF_03112">
    <property type="entry name" value="Asna1_Get3"/>
    <property type="match status" value="1"/>
</dbReference>
<dbReference type="InterPro" id="IPR025723">
    <property type="entry name" value="Anion-transp_ATPase-like_dom"/>
</dbReference>
<dbReference type="InterPro" id="IPR016300">
    <property type="entry name" value="ATPase_ArsA/GET3"/>
</dbReference>
<dbReference type="InterPro" id="IPR027542">
    <property type="entry name" value="ATPase_ArsA/GET3_euk"/>
</dbReference>
<dbReference type="InterPro" id="IPR027417">
    <property type="entry name" value="P-loop_NTPase"/>
</dbReference>
<dbReference type="NCBIfam" id="TIGR00345">
    <property type="entry name" value="GET3_arsA_TRC40"/>
    <property type="match status" value="1"/>
</dbReference>
<dbReference type="PANTHER" id="PTHR10803">
    <property type="entry name" value="ARSENICAL PUMP-DRIVING ATPASE ARSENITE-TRANSLOCATING ATPASE"/>
    <property type="match status" value="1"/>
</dbReference>
<dbReference type="PANTHER" id="PTHR10803:SF3">
    <property type="entry name" value="ATPASE GET3"/>
    <property type="match status" value="1"/>
</dbReference>
<dbReference type="Pfam" id="PF02374">
    <property type="entry name" value="ArsA_ATPase"/>
    <property type="match status" value="1"/>
</dbReference>
<dbReference type="SUPFAM" id="SSF52540">
    <property type="entry name" value="P-loop containing nucleoside triphosphate hydrolases"/>
    <property type="match status" value="1"/>
</dbReference>
<accession>A5DVY5</accession>
<keyword id="KW-0067">ATP-binding</keyword>
<keyword id="KW-0963">Cytoplasm</keyword>
<keyword id="KW-0256">Endoplasmic reticulum</keyword>
<keyword id="KW-0333">Golgi apparatus</keyword>
<keyword id="KW-0378">Hydrolase</keyword>
<keyword id="KW-0479">Metal-binding</keyword>
<keyword id="KW-0547">Nucleotide-binding</keyword>
<keyword id="KW-1185">Reference proteome</keyword>
<keyword id="KW-0813">Transport</keyword>
<keyword id="KW-0862">Zinc</keyword>
<feature type="chain" id="PRO_0000388211" description="ATPase GET3">
    <location>
        <begin position="1"/>
        <end position="349"/>
    </location>
</feature>
<feature type="active site" evidence="1">
    <location>
        <position position="57"/>
    </location>
</feature>
<feature type="binding site" evidence="1">
    <location>
        <begin position="26"/>
        <end position="33"/>
    </location>
    <ligand>
        <name>ATP</name>
        <dbReference type="ChEBI" id="CHEBI:30616"/>
    </ligand>
</feature>
<feature type="binding site" evidence="1">
    <location>
        <position position="242"/>
    </location>
    <ligand>
        <name>ATP</name>
        <dbReference type="ChEBI" id="CHEBI:30616"/>
    </ligand>
</feature>
<feature type="binding site" evidence="1">
    <location>
        <position position="269"/>
    </location>
    <ligand>
        <name>ATP</name>
        <dbReference type="ChEBI" id="CHEBI:30616"/>
    </ligand>
</feature>
<feature type="binding site" evidence="1">
    <location>
        <position position="281"/>
    </location>
    <ligand>
        <name>Zn(2+)</name>
        <dbReference type="ChEBI" id="CHEBI:29105"/>
        <note>ligand shared between dimeric partners</note>
    </ligand>
</feature>
<feature type="binding site" evidence="1">
    <location>
        <position position="284"/>
    </location>
    <ligand>
        <name>Zn(2+)</name>
        <dbReference type="ChEBI" id="CHEBI:29105"/>
        <note>ligand shared between dimeric partners</note>
    </ligand>
</feature>